<proteinExistence type="inferred from homology"/>
<comment type="function">
    <text evidence="1">Pathogenicity determinant (By similarity). May act as a suppressor of RNA-mediated gene silencing, also known as post-transcriptional gene silencing (PTGS), a mechanism of plant viral defense that limits the accumulation of viral RNAs.</text>
</comment>
<comment type="similarity">
    <text evidence="2">Belongs to the geminiviridae protein AC4/C4 family.</text>
</comment>
<reference key="1">
    <citation type="journal article" date="1990" name="Nucleic Acids Res.">
        <title>Nucleotide sequence of the infectious cloned DNA components of African cassava mosaic virus (Nigerian strain).</title>
        <authorList>
            <person name="Morris B."/>
            <person name="Coates L."/>
            <person name="Lowe S."/>
            <person name="Richardson K."/>
            <person name="Eddy P."/>
        </authorList>
    </citation>
    <scope>NUCLEOTIDE SEQUENCE [GENOMIC DNA]</scope>
</reference>
<feature type="chain" id="PRO_0000323690" description="Protein AC4">
    <location>
        <begin position="1"/>
        <end position="179"/>
    </location>
</feature>
<keyword id="KW-0945">Host-virus interaction</keyword>
<keyword id="KW-1090">Inhibition of host innate immune response by virus</keyword>
<keyword id="KW-1185">Reference proteome</keyword>
<keyword id="KW-0941">Suppressor of RNA silencing</keyword>
<keyword id="KW-0899">Viral immunoevasion</keyword>
<evidence type="ECO:0000250" key="1"/>
<evidence type="ECO:0000305" key="2"/>
<organism>
    <name type="scientific">African cassava mosaic virus (isolate Nigerian)</name>
    <name type="common">ACMV</name>
    <name type="synonym">Cassava latent virus (isolate Nigerian)</name>
    <dbReference type="NCBI Taxonomy" id="222073"/>
    <lineage>
        <taxon>Viruses</taxon>
        <taxon>Monodnaviria</taxon>
        <taxon>Shotokuvirae</taxon>
        <taxon>Cressdnaviricota</taxon>
        <taxon>Repensiviricetes</taxon>
        <taxon>Geplafuvirales</taxon>
        <taxon>Geminiviridae</taxon>
        <taxon>Begomovirus</taxon>
        <taxon>Begomovirus manihotis</taxon>
    </lineage>
</organism>
<organismHost>
    <name type="scientific">Hewittia sublobata</name>
    <dbReference type="NCBI Taxonomy" id="197394"/>
</organismHost>
<organismHost>
    <name type="scientific">Jatropha multifida</name>
    <name type="common">Coralbush</name>
    <dbReference type="NCBI Taxonomy" id="3996"/>
</organismHost>
<organismHost>
    <name type="scientific">Laportea</name>
    <dbReference type="NCBI Taxonomy" id="194268"/>
</organismHost>
<organismHost>
    <name type="scientific">Manihot esculenta</name>
    <name type="common">Cassava</name>
    <name type="synonym">Jatropha manihot</name>
    <dbReference type="NCBI Taxonomy" id="3983"/>
</organismHost>
<sequence>MPFGDNYIMSPINRRRCSRVSPVECLQLTWSKCELLVLEFKPRMSFSHTQIVLYPKNTCCHSFKHYLSHQTLSSLKSVESCIRMGNLTCMPSSNSRERSRLRTIVSSIVYTQAVAPISTPTFKVPNQAQMSSPIWIRTETPSNGDNFRSMDDLLEAVNNQRMMLTPKRLTAAVSQKLLM</sequence>
<dbReference type="EMBL" id="X17095">
    <property type="status" value="NOT_ANNOTATED_CDS"/>
    <property type="molecule type" value="Genomic_DNA"/>
</dbReference>
<dbReference type="Proteomes" id="UP000008453">
    <property type="component" value="Genome"/>
</dbReference>
<dbReference type="GO" id="GO:0052170">
    <property type="term" value="P:symbiont-mediated suppression of host innate immune response"/>
    <property type="evidence" value="ECO:0007669"/>
    <property type="project" value="UniProtKB-KW"/>
</dbReference>
<dbReference type="InterPro" id="IPR002488">
    <property type="entry name" value="Gemini_C4"/>
</dbReference>
<dbReference type="Pfam" id="PF01492">
    <property type="entry name" value="Gemini_C4"/>
    <property type="match status" value="1"/>
</dbReference>
<name>AC4_CLVN</name>
<accession>P0C6G2</accession>
<gene>
    <name type="ORF">AC4</name>
    <name type="ORF">AL4</name>
</gene>
<protein>
    <recommendedName>
        <fullName>Protein AC4</fullName>
    </recommendedName>
    <alternativeName>
        <fullName>Protein AL4</fullName>
    </alternativeName>
</protein>